<evidence type="ECO:0000250" key="1">
    <source>
        <dbReference type="UniProtKB" id="Q84H44"/>
    </source>
</evidence>
<evidence type="ECO:0000305" key="2"/>
<accession>Q84H41</accession>
<organism>
    <name type="scientific">Alcaligenes xylosoxydans xylosoxydans</name>
    <name type="common">Achromobacter xylosoxidans</name>
    <dbReference type="NCBI Taxonomy" id="85698"/>
    <lineage>
        <taxon>Bacteria</taxon>
        <taxon>Pseudomonadati</taxon>
        <taxon>Pseudomonadota</taxon>
        <taxon>Betaproteobacteria</taxon>
        <taxon>Burkholderiales</taxon>
        <taxon>Alcaligenaceae</taxon>
        <taxon>Achromobacter</taxon>
    </lineage>
</organism>
<gene>
    <name type="primary">xsc</name>
</gene>
<sequence>MAATDNRKVVEGVHKMTPSEAFVETCVANGVSEMFGIMGSAFMDAMDIFAPAGIRLIPVVHEQGAAHMADGYARVSGRHGVVIGQNGPGISNCVTGIAAAYWAHSPVVIVTPETGTMGMGLGGFQEANQLPMFQEFTKYQGHVCNPKRMAEFTGRVFDRAMSEMGPTQLNIPRDYFYGEIECEIPKPMRVDRGHGGEASLQAAVELLKTAKFPVILAGGGVVMGDAVEEAKQLAERLGAPVATGYLRNDAFPAKHPLWAGPLGYQGSKAAMKLIAQADVVIALGSRMGPFGTLPQHGMDYWPKAAKIIQIEADHTNLGLVKKIAVGINGDAKAVAAELSRRLADVTLGCDATKAARADTIATEKAAWEKELDGWTHERDPYSLDMIEEAKGERTPTGGSYLHPRQVLRELEKAMPARVMVSTDIGNINSVANSYLRFDEPRSFFAPMSFGNCGYALPTIIGAKCAAPDRPAIAYAGDGAWGMSMMEIMTAVRHDIPVTAVVFHNRQWGAEKKNQVDFYNRRFVAGELESESFSDIAKAMGAEGIVVDHIEDVGPALQKAIDMQMKEGKTCVIEIMCTRELGDPFRRDALSKPVRMLDKYKDYV</sequence>
<keyword id="KW-0012">Acyltransferase</keyword>
<keyword id="KW-0963">Cytoplasm</keyword>
<keyword id="KW-0903">Direct protein sequencing</keyword>
<keyword id="KW-0460">Magnesium</keyword>
<keyword id="KW-0479">Metal-binding</keyword>
<keyword id="KW-0786">Thiamine pyrophosphate</keyword>
<keyword id="KW-0808">Transferase</keyword>
<protein>
    <recommendedName>
        <fullName>Sulfoacetaldehyde acetyltransferase</fullName>
        <ecNumber>2.3.3.15</ecNumber>
    </recommendedName>
</protein>
<proteinExistence type="evidence at protein level"/>
<dbReference type="EC" id="2.3.3.15"/>
<dbReference type="EMBL" id="AY134844">
    <property type="protein sequence ID" value="AAN08492.1"/>
    <property type="molecule type" value="Genomic_DNA"/>
</dbReference>
<dbReference type="SMR" id="Q84H41"/>
<dbReference type="UniPathway" id="UPA00336">
    <property type="reaction ID" value="UER00544"/>
</dbReference>
<dbReference type="GO" id="GO:0005948">
    <property type="term" value="C:acetolactate synthase complex"/>
    <property type="evidence" value="ECO:0007669"/>
    <property type="project" value="TreeGrafter"/>
</dbReference>
<dbReference type="GO" id="GO:0003984">
    <property type="term" value="F:acetolactate synthase activity"/>
    <property type="evidence" value="ECO:0007669"/>
    <property type="project" value="TreeGrafter"/>
</dbReference>
<dbReference type="GO" id="GO:0050660">
    <property type="term" value="F:flavin adenine dinucleotide binding"/>
    <property type="evidence" value="ECO:0007669"/>
    <property type="project" value="TreeGrafter"/>
</dbReference>
<dbReference type="GO" id="GO:0000287">
    <property type="term" value="F:magnesium ion binding"/>
    <property type="evidence" value="ECO:0007669"/>
    <property type="project" value="InterPro"/>
</dbReference>
<dbReference type="GO" id="GO:0050487">
    <property type="term" value="F:sulfoacetaldehyde acetyltransferase activity"/>
    <property type="evidence" value="ECO:0007669"/>
    <property type="project" value="UniProtKB-EC"/>
</dbReference>
<dbReference type="GO" id="GO:0030976">
    <property type="term" value="F:thiamine pyrophosphate binding"/>
    <property type="evidence" value="ECO:0007669"/>
    <property type="project" value="InterPro"/>
</dbReference>
<dbReference type="GO" id="GO:0009097">
    <property type="term" value="P:isoleucine biosynthetic process"/>
    <property type="evidence" value="ECO:0007669"/>
    <property type="project" value="TreeGrafter"/>
</dbReference>
<dbReference type="GO" id="GO:0009099">
    <property type="term" value="P:L-valine biosynthetic process"/>
    <property type="evidence" value="ECO:0007669"/>
    <property type="project" value="TreeGrafter"/>
</dbReference>
<dbReference type="GO" id="GO:0019529">
    <property type="term" value="P:taurine catabolic process"/>
    <property type="evidence" value="ECO:0007669"/>
    <property type="project" value="InterPro"/>
</dbReference>
<dbReference type="CDD" id="cd07035">
    <property type="entry name" value="TPP_PYR_POX_like"/>
    <property type="match status" value="1"/>
</dbReference>
<dbReference type="CDD" id="cd02013">
    <property type="entry name" value="TPP_Xsc_like"/>
    <property type="match status" value="1"/>
</dbReference>
<dbReference type="Gene3D" id="3.40.50.970">
    <property type="match status" value="2"/>
</dbReference>
<dbReference type="Gene3D" id="3.40.50.1220">
    <property type="entry name" value="TPP-binding domain"/>
    <property type="match status" value="1"/>
</dbReference>
<dbReference type="InterPro" id="IPR029035">
    <property type="entry name" value="DHS-like_NAD/FAD-binding_dom"/>
</dbReference>
<dbReference type="InterPro" id="IPR017820">
    <property type="entry name" value="Sulphoacetald_Actrfrase"/>
</dbReference>
<dbReference type="InterPro" id="IPR029061">
    <property type="entry name" value="THDP-binding"/>
</dbReference>
<dbReference type="InterPro" id="IPR012000">
    <property type="entry name" value="Thiamin_PyroP_enz_cen_dom"/>
</dbReference>
<dbReference type="InterPro" id="IPR012001">
    <property type="entry name" value="Thiamin_PyroP_enz_TPP-bd_dom"/>
</dbReference>
<dbReference type="InterPro" id="IPR045229">
    <property type="entry name" value="TPP_enz"/>
</dbReference>
<dbReference type="InterPro" id="IPR011766">
    <property type="entry name" value="TPP_enzyme_TPP-bd"/>
</dbReference>
<dbReference type="NCBIfam" id="NF005713">
    <property type="entry name" value="PRK07525.1"/>
    <property type="match status" value="1"/>
</dbReference>
<dbReference type="NCBIfam" id="TIGR03457">
    <property type="entry name" value="sulphoacet_xsc"/>
    <property type="match status" value="1"/>
</dbReference>
<dbReference type="PANTHER" id="PTHR18968:SF13">
    <property type="entry name" value="ACETOLACTATE SYNTHASE CATALYTIC SUBUNIT, MITOCHONDRIAL"/>
    <property type="match status" value="1"/>
</dbReference>
<dbReference type="PANTHER" id="PTHR18968">
    <property type="entry name" value="THIAMINE PYROPHOSPHATE ENZYMES"/>
    <property type="match status" value="1"/>
</dbReference>
<dbReference type="Pfam" id="PF02775">
    <property type="entry name" value="TPP_enzyme_C"/>
    <property type="match status" value="1"/>
</dbReference>
<dbReference type="Pfam" id="PF00205">
    <property type="entry name" value="TPP_enzyme_M"/>
    <property type="match status" value="1"/>
</dbReference>
<dbReference type="Pfam" id="PF02776">
    <property type="entry name" value="TPP_enzyme_N"/>
    <property type="match status" value="1"/>
</dbReference>
<dbReference type="SUPFAM" id="SSF52467">
    <property type="entry name" value="DHS-like NAD/FAD-binding domain"/>
    <property type="match status" value="1"/>
</dbReference>
<dbReference type="SUPFAM" id="SSF52518">
    <property type="entry name" value="Thiamin diphosphate-binding fold (THDP-binding)"/>
    <property type="match status" value="2"/>
</dbReference>
<name>XSC_ALCXX</name>
<comment type="catalytic activity">
    <reaction>
        <text>acetyl phosphate + sulfite + H(+) = sulfoacetaldehyde + phosphate</text>
        <dbReference type="Rhea" id="RHEA:24204"/>
        <dbReference type="ChEBI" id="CHEBI:15378"/>
        <dbReference type="ChEBI" id="CHEBI:17359"/>
        <dbReference type="ChEBI" id="CHEBI:22191"/>
        <dbReference type="ChEBI" id="CHEBI:43474"/>
        <dbReference type="ChEBI" id="CHEBI:58246"/>
        <dbReference type="EC" id="2.3.3.15"/>
    </reaction>
</comment>
<comment type="cofactor">
    <cofactor evidence="1">
        <name>Mg(2+)</name>
        <dbReference type="ChEBI" id="CHEBI:18420"/>
    </cofactor>
</comment>
<comment type="cofactor">
    <cofactor evidence="1">
        <name>thiamine diphosphate</name>
        <dbReference type="ChEBI" id="CHEBI:58937"/>
    </cofactor>
</comment>
<comment type="pathway">
    <text>Organosulfur degradation; taurine degradation via aerobic pathway; acetyl phosphate and sulfite from taurine: step 2/2.</text>
</comment>
<comment type="subunit">
    <text>Homodimer or homotetramer.</text>
</comment>
<comment type="subcellular location">
    <subcellularLocation>
        <location>Cytoplasm</location>
    </subcellularLocation>
</comment>
<comment type="similarity">
    <text evidence="2">Belongs to the TPP enzyme family.</text>
</comment>
<reference key="1">
    <citation type="journal article" date="2003" name="Biochem. J.">
        <title>Sulphoacetaldehyde acetyltransferase yields acetyl phosphate: purification from Alcaligenes defragrans and gene clusters in taurine degradation.</title>
        <authorList>
            <person name="Ruff J."/>
            <person name="Denger K."/>
            <person name="Cook A.M."/>
        </authorList>
    </citation>
    <scope>NUCLEOTIDE SEQUENCE [GENOMIC DNA]</scope>
    <scope>PARTIAL PROTEIN SEQUENCE</scope>
    <scope>CHARACTERIZATION</scope>
    <source>
        <strain>NCIMB 10751</strain>
    </source>
</reference>
<feature type="initiator methionine" description="Removed">
    <location>
        <position position="1"/>
    </location>
</feature>
<feature type="chain" id="PRO_0000090844" description="Sulfoacetaldehyde acetyltransferase">
    <location>
        <begin position="2"/>
        <end position="603"/>
    </location>
</feature>